<organism>
    <name type="scientific">Salmonella typhi</name>
    <dbReference type="NCBI Taxonomy" id="90370"/>
    <lineage>
        <taxon>Bacteria</taxon>
        <taxon>Pseudomonadati</taxon>
        <taxon>Pseudomonadota</taxon>
        <taxon>Gammaproteobacteria</taxon>
        <taxon>Enterobacterales</taxon>
        <taxon>Enterobacteriaceae</taxon>
        <taxon>Salmonella</taxon>
    </lineage>
</organism>
<feature type="chain" id="PRO_0000109306" description="Fatty acid oxidation complex subunit alpha">
    <location>
        <begin position="1"/>
        <end position="715"/>
    </location>
</feature>
<feature type="region of interest" description="Enoyl-CoA hydratase" evidence="1">
    <location>
        <begin position="1"/>
        <end position="190"/>
    </location>
</feature>
<feature type="region of interest" description="3-hydroxyacyl-CoA dehydrogenase" evidence="1">
    <location>
        <begin position="306"/>
        <end position="714"/>
    </location>
</feature>
<feature type="site" description="Important for catalytic activity" evidence="1">
    <location>
        <position position="118"/>
    </location>
</feature>
<feature type="site" description="Important for catalytic activity" evidence="1">
    <location>
        <position position="140"/>
    </location>
</feature>
<accession>Q8Z4Z0</accession>
<accession>Q7CBC6</accession>
<gene>
    <name evidence="1" type="primary">fadJ</name>
    <name type="ordered locus">STY2620</name>
    <name type="ordered locus">t0476</name>
</gene>
<evidence type="ECO:0000255" key="1">
    <source>
        <dbReference type="HAMAP-Rule" id="MF_01617"/>
    </source>
</evidence>
<keyword id="KW-0963">Cytoplasm</keyword>
<keyword id="KW-0276">Fatty acid metabolism</keyword>
<keyword id="KW-0413">Isomerase</keyword>
<keyword id="KW-0442">Lipid degradation</keyword>
<keyword id="KW-0443">Lipid metabolism</keyword>
<keyword id="KW-0456">Lyase</keyword>
<keyword id="KW-0511">Multifunctional enzyme</keyword>
<keyword id="KW-0520">NAD</keyword>
<keyword id="KW-0560">Oxidoreductase</keyword>
<name>FADJ_SALTI</name>
<sequence length="715" mass="77214">MTTTSAFMLSVRLDNVAVVAIDVPGEKVNTLKAEFAAQVRAILKQIRENKALQGVVFISAKADNFIAGADINMIGHCQNAQEAETLARQGQQLMAEIQALPVPVIAAIHGACLGGGLEMALACHRRICTDDVKTVLGLPEVQLGLLPGSGGTQRLPRLVGVSTALDMILTGKQLRARQALKAGLVDDVVPQTILLEAAVELAKKERLAQRTLPVRERILAGPLGRALLFRLVRKKTAQKTQGNYPATERIIDVIETGLAQGSSSGYDAEARAFGELAMTPQSQALRAVFFASTEVKKDPGSDAPPGPLNSVGILGGGLMGGGIAWVTACKGGLPVRIKDINTQGINHALKYSWDLLETKVRRRHIKASERDKQLALISGSTDYRGFSHRDLVIEAVFEDLPLKQQMVAEVEQNCATHTIFASNTSSLPIGDIAANAARPEQVIGLHFFSPVEKMPLVEVIPHASTSAQTIATTVKLAKKQGKTPIVVSDKAGFYVNRILAPYINEAIRMLTEGERVEHIDAALVKFGFPVGPIQLLDEVGIDTGTKIIPVLEAAYGERFSAPANVVASILNDDRKGRKNGRGFYLYGEKGRKSKKQVDPAIYKLIGVQGQSRLSAQQVAERCVMLMLNEAARCFDEKVIRSARDGDIGAVFGIGFPPFLGGPFRYMDALGPGEMVATLQRLAALYGPRYAPCEQLVRMAERREHFWTNGETDQGN</sequence>
<protein>
    <recommendedName>
        <fullName evidence="1">Fatty acid oxidation complex subunit alpha</fullName>
    </recommendedName>
    <domain>
        <recommendedName>
            <fullName evidence="1">Enoyl-CoA hydratase/3-hydroxybutyryl-CoA epimerase</fullName>
            <ecNumber evidence="1">4.2.1.17</ecNumber>
            <ecNumber evidence="1">5.1.2.3</ecNumber>
        </recommendedName>
    </domain>
    <domain>
        <recommendedName>
            <fullName evidence="1">3-hydroxyacyl-CoA dehydrogenase</fullName>
            <ecNumber evidence="1">1.1.1.35</ecNumber>
        </recommendedName>
    </domain>
</protein>
<reference key="1">
    <citation type="journal article" date="2001" name="Nature">
        <title>Complete genome sequence of a multiple drug resistant Salmonella enterica serovar Typhi CT18.</title>
        <authorList>
            <person name="Parkhill J."/>
            <person name="Dougan G."/>
            <person name="James K.D."/>
            <person name="Thomson N.R."/>
            <person name="Pickard D."/>
            <person name="Wain J."/>
            <person name="Churcher C.M."/>
            <person name="Mungall K.L."/>
            <person name="Bentley S.D."/>
            <person name="Holden M.T.G."/>
            <person name="Sebaihia M."/>
            <person name="Baker S."/>
            <person name="Basham D."/>
            <person name="Brooks K."/>
            <person name="Chillingworth T."/>
            <person name="Connerton P."/>
            <person name="Cronin A."/>
            <person name="Davis P."/>
            <person name="Davies R.M."/>
            <person name="Dowd L."/>
            <person name="White N."/>
            <person name="Farrar J."/>
            <person name="Feltwell T."/>
            <person name="Hamlin N."/>
            <person name="Haque A."/>
            <person name="Hien T.T."/>
            <person name="Holroyd S."/>
            <person name="Jagels K."/>
            <person name="Krogh A."/>
            <person name="Larsen T.S."/>
            <person name="Leather S."/>
            <person name="Moule S."/>
            <person name="O'Gaora P."/>
            <person name="Parry C."/>
            <person name="Quail M.A."/>
            <person name="Rutherford K.M."/>
            <person name="Simmonds M."/>
            <person name="Skelton J."/>
            <person name="Stevens K."/>
            <person name="Whitehead S."/>
            <person name="Barrell B.G."/>
        </authorList>
    </citation>
    <scope>NUCLEOTIDE SEQUENCE [LARGE SCALE GENOMIC DNA]</scope>
    <source>
        <strain>CT18</strain>
    </source>
</reference>
<reference key="2">
    <citation type="journal article" date="2003" name="J. Bacteriol.">
        <title>Comparative genomics of Salmonella enterica serovar Typhi strains Ty2 and CT18.</title>
        <authorList>
            <person name="Deng W."/>
            <person name="Liou S.-R."/>
            <person name="Plunkett G. III"/>
            <person name="Mayhew G.F."/>
            <person name="Rose D.J."/>
            <person name="Burland V."/>
            <person name="Kodoyianni V."/>
            <person name="Schwartz D.C."/>
            <person name="Blattner F.R."/>
        </authorList>
    </citation>
    <scope>NUCLEOTIDE SEQUENCE [LARGE SCALE GENOMIC DNA]</scope>
    <source>
        <strain>ATCC 700931 / Ty2</strain>
    </source>
</reference>
<dbReference type="EC" id="4.2.1.17" evidence="1"/>
<dbReference type="EC" id="5.1.2.3" evidence="1"/>
<dbReference type="EC" id="1.1.1.35" evidence="1"/>
<dbReference type="EMBL" id="AE014613">
    <property type="protein sequence ID" value="AAO68183.1"/>
    <property type="molecule type" value="Genomic_DNA"/>
</dbReference>
<dbReference type="EMBL" id="AL513382">
    <property type="protein sequence ID" value="CAD07620.1"/>
    <property type="molecule type" value="Genomic_DNA"/>
</dbReference>
<dbReference type="RefSeq" id="NP_456929.1">
    <property type="nucleotide sequence ID" value="NC_003198.1"/>
</dbReference>
<dbReference type="RefSeq" id="WP_000214156.1">
    <property type="nucleotide sequence ID" value="NZ_WSUR01000045.1"/>
</dbReference>
<dbReference type="SMR" id="Q8Z4Z0"/>
<dbReference type="STRING" id="220341.gene:17586517"/>
<dbReference type="KEGG" id="stt:t0476"/>
<dbReference type="KEGG" id="sty:STY2620"/>
<dbReference type="PATRIC" id="fig|220341.7.peg.2653"/>
<dbReference type="eggNOG" id="COG1024">
    <property type="taxonomic scope" value="Bacteria"/>
</dbReference>
<dbReference type="eggNOG" id="COG1250">
    <property type="taxonomic scope" value="Bacteria"/>
</dbReference>
<dbReference type="HOGENOM" id="CLU_009834_16_3_6"/>
<dbReference type="OMA" id="ESTTIRW"/>
<dbReference type="OrthoDB" id="5389341at2"/>
<dbReference type="UniPathway" id="UPA00659"/>
<dbReference type="Proteomes" id="UP000000541">
    <property type="component" value="Chromosome"/>
</dbReference>
<dbReference type="Proteomes" id="UP000002670">
    <property type="component" value="Chromosome"/>
</dbReference>
<dbReference type="GO" id="GO:0005737">
    <property type="term" value="C:cytoplasm"/>
    <property type="evidence" value="ECO:0007669"/>
    <property type="project" value="UniProtKB-SubCell"/>
</dbReference>
<dbReference type="GO" id="GO:0008692">
    <property type="term" value="F:3-hydroxybutyryl-CoA epimerase activity"/>
    <property type="evidence" value="ECO:0007669"/>
    <property type="project" value="UniProtKB-UniRule"/>
</dbReference>
<dbReference type="GO" id="GO:0004300">
    <property type="term" value="F:enoyl-CoA hydratase activity"/>
    <property type="evidence" value="ECO:0007669"/>
    <property type="project" value="UniProtKB-UniRule"/>
</dbReference>
<dbReference type="GO" id="GO:0016509">
    <property type="term" value="F:long-chain-3-hydroxyacyl-CoA dehydrogenase activity"/>
    <property type="evidence" value="ECO:0007669"/>
    <property type="project" value="TreeGrafter"/>
</dbReference>
<dbReference type="GO" id="GO:0070403">
    <property type="term" value="F:NAD+ binding"/>
    <property type="evidence" value="ECO:0007669"/>
    <property type="project" value="InterPro"/>
</dbReference>
<dbReference type="GO" id="GO:0006635">
    <property type="term" value="P:fatty acid beta-oxidation"/>
    <property type="evidence" value="ECO:0007669"/>
    <property type="project" value="UniProtKB-UniRule"/>
</dbReference>
<dbReference type="CDD" id="cd06558">
    <property type="entry name" value="crotonase-like"/>
    <property type="match status" value="1"/>
</dbReference>
<dbReference type="FunFam" id="1.10.1040.50:FF:000003">
    <property type="entry name" value="Fatty acid oxidation complex subunit alpha"/>
    <property type="match status" value="1"/>
</dbReference>
<dbReference type="FunFam" id="3.90.226.10:FF:000011">
    <property type="entry name" value="Fatty acid oxidation complex subunit alpha"/>
    <property type="match status" value="1"/>
</dbReference>
<dbReference type="FunFam" id="3.40.50.720:FF:000009">
    <property type="entry name" value="Fatty oxidation complex, alpha subunit"/>
    <property type="match status" value="1"/>
</dbReference>
<dbReference type="Gene3D" id="1.10.1040.50">
    <property type="match status" value="1"/>
</dbReference>
<dbReference type="Gene3D" id="3.90.226.10">
    <property type="entry name" value="2-enoyl-CoA Hydratase, Chain A, domain 1"/>
    <property type="match status" value="1"/>
</dbReference>
<dbReference type="Gene3D" id="3.40.50.720">
    <property type="entry name" value="NAD(P)-binding Rossmann-like Domain"/>
    <property type="match status" value="1"/>
</dbReference>
<dbReference type="HAMAP" id="MF_01617">
    <property type="entry name" value="FadJ"/>
    <property type="match status" value="1"/>
</dbReference>
<dbReference type="InterPro" id="IPR006180">
    <property type="entry name" value="3-OHacyl-CoA_DH_CS"/>
</dbReference>
<dbReference type="InterPro" id="IPR006176">
    <property type="entry name" value="3-OHacyl-CoA_DH_NAD-bd"/>
</dbReference>
<dbReference type="InterPro" id="IPR006108">
    <property type="entry name" value="3HC_DH_C"/>
</dbReference>
<dbReference type="InterPro" id="IPR008927">
    <property type="entry name" value="6-PGluconate_DH-like_C_sf"/>
</dbReference>
<dbReference type="InterPro" id="IPR029045">
    <property type="entry name" value="ClpP/crotonase-like_dom_sf"/>
</dbReference>
<dbReference type="InterPro" id="IPR001753">
    <property type="entry name" value="Enoyl-CoA_hydra/iso"/>
</dbReference>
<dbReference type="InterPro" id="IPR050136">
    <property type="entry name" value="FA_oxidation_alpha_subunit"/>
</dbReference>
<dbReference type="InterPro" id="IPR012802">
    <property type="entry name" value="FadJ"/>
</dbReference>
<dbReference type="InterPro" id="IPR036291">
    <property type="entry name" value="NAD(P)-bd_dom_sf"/>
</dbReference>
<dbReference type="NCBIfam" id="TIGR02440">
    <property type="entry name" value="FadJ"/>
    <property type="match status" value="1"/>
</dbReference>
<dbReference type="NCBIfam" id="NF008363">
    <property type="entry name" value="PRK11154.1"/>
    <property type="match status" value="1"/>
</dbReference>
<dbReference type="PANTHER" id="PTHR43612">
    <property type="entry name" value="TRIFUNCTIONAL ENZYME SUBUNIT ALPHA"/>
    <property type="match status" value="1"/>
</dbReference>
<dbReference type="PANTHER" id="PTHR43612:SF3">
    <property type="entry name" value="TRIFUNCTIONAL ENZYME SUBUNIT ALPHA, MITOCHONDRIAL"/>
    <property type="match status" value="1"/>
</dbReference>
<dbReference type="Pfam" id="PF00725">
    <property type="entry name" value="3HCDH"/>
    <property type="match status" value="1"/>
</dbReference>
<dbReference type="Pfam" id="PF02737">
    <property type="entry name" value="3HCDH_N"/>
    <property type="match status" value="1"/>
</dbReference>
<dbReference type="Pfam" id="PF00378">
    <property type="entry name" value="ECH_1"/>
    <property type="match status" value="1"/>
</dbReference>
<dbReference type="SUPFAM" id="SSF48179">
    <property type="entry name" value="6-phosphogluconate dehydrogenase C-terminal domain-like"/>
    <property type="match status" value="2"/>
</dbReference>
<dbReference type="SUPFAM" id="SSF52096">
    <property type="entry name" value="ClpP/crotonase"/>
    <property type="match status" value="1"/>
</dbReference>
<dbReference type="SUPFAM" id="SSF51735">
    <property type="entry name" value="NAD(P)-binding Rossmann-fold domains"/>
    <property type="match status" value="1"/>
</dbReference>
<dbReference type="PROSITE" id="PS00067">
    <property type="entry name" value="3HCDH"/>
    <property type="match status" value="1"/>
</dbReference>
<comment type="function">
    <text evidence="1">Catalyzes the formation of a hydroxyacyl-CoA by addition of water on enoyl-CoA. Also exhibits 3-hydroxyacyl-CoA epimerase and 3-hydroxyacyl-CoA dehydrogenase activities.</text>
</comment>
<comment type="catalytic activity">
    <reaction evidence="1">
        <text>a (3S)-3-hydroxyacyl-CoA = a (2E)-enoyl-CoA + H2O</text>
        <dbReference type="Rhea" id="RHEA:16105"/>
        <dbReference type="ChEBI" id="CHEBI:15377"/>
        <dbReference type="ChEBI" id="CHEBI:57318"/>
        <dbReference type="ChEBI" id="CHEBI:58856"/>
        <dbReference type="EC" id="4.2.1.17"/>
    </reaction>
</comment>
<comment type="catalytic activity">
    <reaction evidence="1">
        <text>a 4-saturated-(3S)-3-hydroxyacyl-CoA = a (3E)-enoyl-CoA + H2O</text>
        <dbReference type="Rhea" id="RHEA:20724"/>
        <dbReference type="ChEBI" id="CHEBI:15377"/>
        <dbReference type="ChEBI" id="CHEBI:58521"/>
        <dbReference type="ChEBI" id="CHEBI:137480"/>
        <dbReference type="EC" id="4.2.1.17"/>
    </reaction>
</comment>
<comment type="catalytic activity">
    <reaction evidence="1">
        <text>a (3S)-3-hydroxyacyl-CoA + NAD(+) = a 3-oxoacyl-CoA + NADH + H(+)</text>
        <dbReference type="Rhea" id="RHEA:22432"/>
        <dbReference type="ChEBI" id="CHEBI:15378"/>
        <dbReference type="ChEBI" id="CHEBI:57318"/>
        <dbReference type="ChEBI" id="CHEBI:57540"/>
        <dbReference type="ChEBI" id="CHEBI:57945"/>
        <dbReference type="ChEBI" id="CHEBI:90726"/>
        <dbReference type="EC" id="1.1.1.35"/>
    </reaction>
</comment>
<comment type="catalytic activity">
    <reaction evidence="1">
        <text>(3S)-3-hydroxybutanoyl-CoA = (3R)-3-hydroxybutanoyl-CoA</text>
        <dbReference type="Rhea" id="RHEA:21760"/>
        <dbReference type="ChEBI" id="CHEBI:57315"/>
        <dbReference type="ChEBI" id="CHEBI:57316"/>
        <dbReference type="EC" id="5.1.2.3"/>
    </reaction>
</comment>
<comment type="pathway">
    <text evidence="1">Lipid metabolism; fatty acid beta-oxidation.</text>
</comment>
<comment type="subunit">
    <text evidence="1">Heterotetramer of two alpha chains (FadJ) and two beta chains (FadI).</text>
</comment>
<comment type="subcellular location">
    <subcellularLocation>
        <location evidence="1">Cytoplasm</location>
    </subcellularLocation>
</comment>
<comment type="similarity">
    <text evidence="1">In the N-terminal section; belongs to the enoyl-CoA hydratase/isomerase family.</text>
</comment>
<comment type="similarity">
    <text evidence="1">In the central section; belongs to the 3-hydroxyacyl-CoA dehydrogenase family.</text>
</comment>
<proteinExistence type="inferred from homology"/>